<organism>
    <name type="scientific">Roseiflexus sp. (strain RS-1)</name>
    <dbReference type="NCBI Taxonomy" id="357808"/>
    <lineage>
        <taxon>Bacteria</taxon>
        <taxon>Bacillati</taxon>
        <taxon>Chloroflexota</taxon>
        <taxon>Chloroflexia</taxon>
        <taxon>Chloroflexales</taxon>
        <taxon>Roseiflexineae</taxon>
        <taxon>Roseiflexaceae</taxon>
        <taxon>Roseiflexus</taxon>
    </lineage>
</organism>
<keyword id="KW-0963">Cytoplasm</keyword>
<keyword id="KW-0238">DNA-binding</keyword>
<keyword id="KW-0677">Repeat</keyword>
<keyword id="KW-0804">Transcription</keyword>
<keyword id="KW-0805">Transcription regulation</keyword>
<evidence type="ECO:0000255" key="1">
    <source>
        <dbReference type="HAMAP-Rule" id="MF_01008"/>
    </source>
</evidence>
<evidence type="ECO:0000255" key="2">
    <source>
        <dbReference type="PROSITE-ProRule" id="PRU01076"/>
    </source>
</evidence>
<proteinExistence type="inferred from homology"/>
<feature type="chain" id="PRO_1000062924" description="Transcriptional regulator MraZ">
    <location>
        <begin position="1"/>
        <end position="143"/>
    </location>
</feature>
<feature type="domain" description="SpoVT-AbrB 1" evidence="2">
    <location>
        <begin position="5"/>
        <end position="47"/>
    </location>
</feature>
<feature type="domain" description="SpoVT-AbrB 2" evidence="2">
    <location>
        <begin position="76"/>
        <end position="119"/>
    </location>
</feature>
<dbReference type="EMBL" id="CP000686">
    <property type="protein sequence ID" value="ABQ92131.1"/>
    <property type="molecule type" value="Genomic_DNA"/>
</dbReference>
<dbReference type="RefSeq" id="WP_011958473.1">
    <property type="nucleotide sequence ID" value="NC_009523.1"/>
</dbReference>
<dbReference type="SMR" id="A5UZS8"/>
<dbReference type="STRING" id="357808.RoseRS_3777"/>
<dbReference type="KEGG" id="rrs:RoseRS_3777"/>
<dbReference type="eggNOG" id="COG2001">
    <property type="taxonomic scope" value="Bacteria"/>
</dbReference>
<dbReference type="HOGENOM" id="CLU_107907_0_3_0"/>
<dbReference type="OrthoDB" id="9807753at2"/>
<dbReference type="Proteomes" id="UP000006554">
    <property type="component" value="Chromosome"/>
</dbReference>
<dbReference type="GO" id="GO:0005737">
    <property type="term" value="C:cytoplasm"/>
    <property type="evidence" value="ECO:0007669"/>
    <property type="project" value="UniProtKB-UniRule"/>
</dbReference>
<dbReference type="GO" id="GO:0009295">
    <property type="term" value="C:nucleoid"/>
    <property type="evidence" value="ECO:0007669"/>
    <property type="project" value="UniProtKB-SubCell"/>
</dbReference>
<dbReference type="GO" id="GO:0003700">
    <property type="term" value="F:DNA-binding transcription factor activity"/>
    <property type="evidence" value="ECO:0007669"/>
    <property type="project" value="UniProtKB-UniRule"/>
</dbReference>
<dbReference type="GO" id="GO:0000976">
    <property type="term" value="F:transcription cis-regulatory region binding"/>
    <property type="evidence" value="ECO:0007669"/>
    <property type="project" value="TreeGrafter"/>
</dbReference>
<dbReference type="GO" id="GO:2000143">
    <property type="term" value="P:negative regulation of DNA-templated transcription initiation"/>
    <property type="evidence" value="ECO:0007669"/>
    <property type="project" value="TreeGrafter"/>
</dbReference>
<dbReference type="CDD" id="cd16321">
    <property type="entry name" value="MraZ_C"/>
    <property type="match status" value="1"/>
</dbReference>
<dbReference type="CDD" id="cd16320">
    <property type="entry name" value="MraZ_N"/>
    <property type="match status" value="1"/>
</dbReference>
<dbReference type="Gene3D" id="3.40.1550.20">
    <property type="entry name" value="Transcriptional regulator MraZ domain"/>
    <property type="match status" value="1"/>
</dbReference>
<dbReference type="HAMAP" id="MF_01008">
    <property type="entry name" value="MraZ"/>
    <property type="match status" value="1"/>
</dbReference>
<dbReference type="InterPro" id="IPR003444">
    <property type="entry name" value="MraZ"/>
</dbReference>
<dbReference type="InterPro" id="IPR035644">
    <property type="entry name" value="MraZ_C"/>
</dbReference>
<dbReference type="InterPro" id="IPR020603">
    <property type="entry name" value="MraZ_dom"/>
</dbReference>
<dbReference type="InterPro" id="IPR035642">
    <property type="entry name" value="MraZ_N"/>
</dbReference>
<dbReference type="InterPro" id="IPR038619">
    <property type="entry name" value="MraZ_sf"/>
</dbReference>
<dbReference type="InterPro" id="IPR007159">
    <property type="entry name" value="SpoVT-AbrB_dom"/>
</dbReference>
<dbReference type="InterPro" id="IPR037914">
    <property type="entry name" value="SpoVT-AbrB_sf"/>
</dbReference>
<dbReference type="NCBIfam" id="TIGR00242">
    <property type="entry name" value="division/cell wall cluster transcriptional repressor MraZ"/>
    <property type="match status" value="1"/>
</dbReference>
<dbReference type="PANTHER" id="PTHR34701">
    <property type="entry name" value="TRANSCRIPTIONAL REGULATOR MRAZ"/>
    <property type="match status" value="1"/>
</dbReference>
<dbReference type="PANTHER" id="PTHR34701:SF1">
    <property type="entry name" value="TRANSCRIPTIONAL REGULATOR MRAZ"/>
    <property type="match status" value="1"/>
</dbReference>
<dbReference type="Pfam" id="PF02381">
    <property type="entry name" value="MraZ"/>
    <property type="match status" value="2"/>
</dbReference>
<dbReference type="SUPFAM" id="SSF89447">
    <property type="entry name" value="AbrB/MazE/MraZ-like"/>
    <property type="match status" value="1"/>
</dbReference>
<dbReference type="PROSITE" id="PS51740">
    <property type="entry name" value="SPOVT_ABRB"/>
    <property type="match status" value="2"/>
</dbReference>
<sequence length="143" mass="16336">MFLGEYEHTIDDKGRLAIPARFRDALNEGVVITRGFDKCLMGFPRSVWEELARQVSSLPIGSEETRQLQRMLFSGAADMTLDRQGRILIPQNLREFAELGDQAIIAGLNRHFEIWAPRRWQNVLSAMDANASLFAQKLAELRF</sequence>
<name>MRAZ_ROSS1</name>
<reference key="1">
    <citation type="submission" date="2007-04" db="EMBL/GenBank/DDBJ databases">
        <title>Complete sequence of Roseiflexus sp. RS-1.</title>
        <authorList>
            <consortium name="US DOE Joint Genome Institute"/>
            <person name="Copeland A."/>
            <person name="Lucas S."/>
            <person name="Lapidus A."/>
            <person name="Barry K."/>
            <person name="Detter J.C."/>
            <person name="Glavina del Rio T."/>
            <person name="Hammon N."/>
            <person name="Israni S."/>
            <person name="Dalin E."/>
            <person name="Tice H."/>
            <person name="Pitluck S."/>
            <person name="Chertkov O."/>
            <person name="Brettin T."/>
            <person name="Bruce D."/>
            <person name="Han C."/>
            <person name="Schmutz J."/>
            <person name="Larimer F."/>
            <person name="Land M."/>
            <person name="Hauser L."/>
            <person name="Kyrpides N."/>
            <person name="Mikhailova N."/>
            <person name="Bryant D.A."/>
            <person name="Richardson P."/>
        </authorList>
    </citation>
    <scope>NUCLEOTIDE SEQUENCE [LARGE SCALE GENOMIC DNA]</scope>
    <source>
        <strain>RS-1</strain>
    </source>
</reference>
<comment type="subunit">
    <text evidence="1">Forms oligomers.</text>
</comment>
<comment type="subcellular location">
    <subcellularLocation>
        <location evidence="1">Cytoplasm</location>
        <location evidence="1">Nucleoid</location>
    </subcellularLocation>
</comment>
<comment type="similarity">
    <text evidence="1">Belongs to the MraZ family.</text>
</comment>
<protein>
    <recommendedName>
        <fullName>Transcriptional regulator MraZ</fullName>
    </recommendedName>
</protein>
<accession>A5UZS8</accession>
<gene>
    <name evidence="1" type="primary">mraZ</name>
    <name type="ordered locus">RoseRS_3777</name>
</gene>